<name>U86A2_ARATH</name>
<keyword id="KW-0328">Glycosyltransferase</keyword>
<keyword id="KW-1185">Reference proteome</keyword>
<keyword id="KW-0808">Transferase</keyword>
<sequence length="482" mass="53367">MADVRNPTKNHHGHHHLHALLIPYPFQGHVNPFVHLAIKLASQGITVTFVNTHYIHHQITNGSDGDIFAGVRSESGLDIRYATVSDGLPVGFDRSLNHDTYQSSLLHVFYAHVEELVASLVGGDGGVNVMIADTFFVWPSVVARKFGLVCVSFWTEAALVFSLYYHMDLLRIHGHFGAQETRSDLIDYIPGVAAINPKDTASYLQETDTSSVVHQIIFKAFEDVKKVDFVLCNTIQQFEDKTIKALNTKIPFYAIGPIIPFNNQTGSVTTSLWSESDCTQWLNTKPKSSVLYISFGSYAHVTKKDLVEIAHGILLSKVNFVWVVRPDIVSSDETNPLPEGFETEAGDRGIVIPWCCQMTVLSHESVGGFLTHCGWNSILETIWCEVPVLCFPLLTDQVTNRKLVVDDWEIGINLCEDKSDFGRDEVGRNINRLMCGVSKEKIGRVKMSLEGAVRNSGSSSEMNLGLFIDGLLSKVGLSNGKA</sequence>
<gene>
    <name type="primary">UGT86A2</name>
    <name type="ordered locus">At2g28080</name>
    <name type="ORF">F24D13.13</name>
</gene>
<protein>
    <recommendedName>
        <fullName>UDP-glycosyltransferase 86A2</fullName>
        <ecNumber>2.4.1.-</ecNumber>
    </recommendedName>
</protein>
<accession>Q9ZUV0</accession>
<accession>Q8LEW0</accession>
<reference key="1">
    <citation type="journal article" date="1999" name="Nature">
        <title>Sequence and analysis of chromosome 2 of the plant Arabidopsis thaliana.</title>
        <authorList>
            <person name="Lin X."/>
            <person name="Kaul S."/>
            <person name="Rounsley S.D."/>
            <person name="Shea T.P."/>
            <person name="Benito M.-I."/>
            <person name="Town C.D."/>
            <person name="Fujii C.Y."/>
            <person name="Mason T.M."/>
            <person name="Bowman C.L."/>
            <person name="Barnstead M.E."/>
            <person name="Feldblyum T.V."/>
            <person name="Buell C.R."/>
            <person name="Ketchum K.A."/>
            <person name="Lee J.J."/>
            <person name="Ronning C.M."/>
            <person name="Koo H.L."/>
            <person name="Moffat K.S."/>
            <person name="Cronin L.A."/>
            <person name="Shen M."/>
            <person name="Pai G."/>
            <person name="Van Aken S."/>
            <person name="Umayam L."/>
            <person name="Tallon L.J."/>
            <person name="Gill J.E."/>
            <person name="Adams M.D."/>
            <person name="Carrera A.J."/>
            <person name="Creasy T.H."/>
            <person name="Goodman H.M."/>
            <person name="Somerville C.R."/>
            <person name="Copenhaver G.P."/>
            <person name="Preuss D."/>
            <person name="Nierman W.C."/>
            <person name="White O."/>
            <person name="Eisen J.A."/>
            <person name="Salzberg S.L."/>
            <person name="Fraser C.M."/>
            <person name="Venter J.C."/>
        </authorList>
    </citation>
    <scope>NUCLEOTIDE SEQUENCE [LARGE SCALE GENOMIC DNA]</scope>
    <source>
        <strain>cv. Columbia</strain>
    </source>
</reference>
<reference key="2">
    <citation type="journal article" date="2017" name="Plant J.">
        <title>Araport11: a complete reannotation of the Arabidopsis thaliana reference genome.</title>
        <authorList>
            <person name="Cheng C.Y."/>
            <person name="Krishnakumar V."/>
            <person name="Chan A.P."/>
            <person name="Thibaud-Nissen F."/>
            <person name="Schobel S."/>
            <person name="Town C.D."/>
        </authorList>
    </citation>
    <scope>GENOME REANNOTATION</scope>
    <source>
        <strain>cv. Columbia</strain>
    </source>
</reference>
<reference key="3">
    <citation type="submission" date="2005-03" db="EMBL/GenBank/DDBJ databases">
        <title>Large-scale analysis of RIKEN Arabidopsis full-length (RAFL) cDNAs.</title>
        <authorList>
            <person name="Totoki Y."/>
            <person name="Seki M."/>
            <person name="Ishida J."/>
            <person name="Nakajima M."/>
            <person name="Enju A."/>
            <person name="Kamiya A."/>
            <person name="Narusaka M."/>
            <person name="Shin-i T."/>
            <person name="Nakagawa M."/>
            <person name="Sakamoto N."/>
            <person name="Oishi K."/>
            <person name="Kohara Y."/>
            <person name="Kobayashi M."/>
            <person name="Toyoda A."/>
            <person name="Sakaki Y."/>
            <person name="Sakurai T."/>
            <person name="Iida K."/>
            <person name="Akiyama K."/>
            <person name="Satou M."/>
            <person name="Toyoda T."/>
            <person name="Konagaya A."/>
            <person name="Carninci P."/>
            <person name="Kawai J."/>
            <person name="Hayashizaki Y."/>
            <person name="Shinozaki K."/>
        </authorList>
    </citation>
    <scope>NUCLEOTIDE SEQUENCE [LARGE SCALE MRNA]</scope>
    <source>
        <strain>cv. Columbia</strain>
    </source>
</reference>
<reference key="4">
    <citation type="submission" date="2002-03" db="EMBL/GenBank/DDBJ databases">
        <title>Full-length cDNA from Arabidopsis thaliana.</title>
        <authorList>
            <person name="Brover V.V."/>
            <person name="Troukhan M.E."/>
            <person name="Alexandrov N.A."/>
            <person name="Lu Y.-P."/>
            <person name="Flavell R.B."/>
            <person name="Feldmann K.A."/>
        </authorList>
    </citation>
    <scope>NUCLEOTIDE SEQUENCE [LARGE SCALE MRNA]</scope>
</reference>
<reference key="5">
    <citation type="journal article" date="2001" name="J. Biol. Chem.">
        <title>Phylogenetic analysis of the UDP-glycosyltransferase multigene family of Arabidopsis thaliana.</title>
        <authorList>
            <person name="Li Y."/>
            <person name="Baldauf S."/>
            <person name="Lim E.K."/>
            <person name="Bowles D.J."/>
        </authorList>
    </citation>
    <scope>GENE FAMILY</scope>
</reference>
<feature type="chain" id="PRO_0000409132" description="UDP-glycosyltransferase 86A2">
    <location>
        <begin position="1"/>
        <end position="482"/>
    </location>
</feature>
<feature type="binding site" evidence="1">
    <location>
        <position position="297"/>
    </location>
    <ligand>
        <name>UDP-alpha-D-glucose</name>
        <dbReference type="ChEBI" id="CHEBI:58885"/>
    </ligand>
</feature>
<feature type="binding site" evidence="1">
    <location>
        <begin position="355"/>
        <end position="357"/>
    </location>
    <ligand>
        <name>UDP-alpha-D-glucose</name>
        <dbReference type="ChEBI" id="CHEBI:58885"/>
    </ligand>
</feature>
<feature type="binding site" evidence="1">
    <location>
        <begin position="372"/>
        <end position="380"/>
    </location>
    <ligand>
        <name>UDP-alpha-D-glucose</name>
        <dbReference type="ChEBI" id="CHEBI:58885"/>
    </ligand>
</feature>
<feature type="binding site" evidence="1">
    <location>
        <begin position="394"/>
        <end position="397"/>
    </location>
    <ligand>
        <name>UDP-alpha-D-glucose</name>
        <dbReference type="ChEBI" id="CHEBI:58885"/>
    </ligand>
</feature>
<feature type="sequence conflict" description="In Ref. 4; AAM61749." evidence="2" ref="4">
    <original>G</original>
    <variation>D</variation>
    <location>
        <position position="125"/>
    </location>
</feature>
<feature type="sequence conflict" description="In Ref. 4; AAM61749." evidence="2" ref="4">
    <original>S</original>
    <variation>G</variation>
    <location>
        <position position="183"/>
    </location>
</feature>
<evidence type="ECO:0000250" key="1"/>
<evidence type="ECO:0000305" key="2"/>
<dbReference type="EC" id="2.4.1.-"/>
<dbReference type="EMBL" id="AC005851">
    <property type="protein sequence ID" value="AAC98458.1"/>
    <property type="molecule type" value="Genomic_DNA"/>
</dbReference>
<dbReference type="EMBL" id="CP002685">
    <property type="protein sequence ID" value="AEC08076.1"/>
    <property type="molecule type" value="Genomic_DNA"/>
</dbReference>
<dbReference type="EMBL" id="AK221699">
    <property type="protein sequence ID" value="BAD95413.1"/>
    <property type="molecule type" value="mRNA"/>
</dbReference>
<dbReference type="EMBL" id="AY085199">
    <property type="protein sequence ID" value="AAM61749.1"/>
    <property type="molecule type" value="mRNA"/>
</dbReference>
<dbReference type="PIR" id="E84680">
    <property type="entry name" value="E84680"/>
</dbReference>
<dbReference type="RefSeq" id="NP_180375.1">
    <property type="nucleotide sequence ID" value="NM_128367.5"/>
</dbReference>
<dbReference type="SMR" id="Q9ZUV0"/>
<dbReference type="BioGRID" id="2702">
    <property type="interactions" value="3"/>
</dbReference>
<dbReference type="FunCoup" id="Q9ZUV0">
    <property type="interactions" value="100"/>
</dbReference>
<dbReference type="STRING" id="3702.Q9ZUV0"/>
<dbReference type="CAZy" id="GT1">
    <property type="family name" value="Glycosyltransferase Family 1"/>
</dbReference>
<dbReference type="PaxDb" id="3702-AT2G28080.1"/>
<dbReference type="ProteomicsDB" id="243235"/>
<dbReference type="EnsemblPlants" id="AT2G28080.1">
    <property type="protein sequence ID" value="AT2G28080.1"/>
    <property type="gene ID" value="AT2G28080"/>
</dbReference>
<dbReference type="GeneID" id="817352"/>
<dbReference type="Gramene" id="AT2G28080.1">
    <property type="protein sequence ID" value="AT2G28080.1"/>
    <property type="gene ID" value="AT2G28080"/>
</dbReference>
<dbReference type="KEGG" id="ath:AT2G28080"/>
<dbReference type="Araport" id="AT2G28080"/>
<dbReference type="TAIR" id="AT2G28080"/>
<dbReference type="eggNOG" id="KOG1192">
    <property type="taxonomic scope" value="Eukaryota"/>
</dbReference>
<dbReference type="HOGENOM" id="CLU_001724_0_0_1"/>
<dbReference type="InParanoid" id="Q9ZUV0"/>
<dbReference type="OMA" id="NINRLMC"/>
<dbReference type="PhylomeDB" id="Q9ZUV0"/>
<dbReference type="BioCyc" id="ARA:AT2G28080-MONOMER"/>
<dbReference type="PRO" id="PR:Q9ZUV0"/>
<dbReference type="Proteomes" id="UP000006548">
    <property type="component" value="Chromosome 2"/>
</dbReference>
<dbReference type="ExpressionAtlas" id="Q9ZUV0">
    <property type="expression patterns" value="baseline and differential"/>
</dbReference>
<dbReference type="GO" id="GO:0035251">
    <property type="term" value="F:UDP-glucosyltransferase activity"/>
    <property type="evidence" value="ECO:0007669"/>
    <property type="project" value="UniProtKB-ARBA"/>
</dbReference>
<dbReference type="CDD" id="cd03784">
    <property type="entry name" value="GT1_Gtf-like"/>
    <property type="match status" value="1"/>
</dbReference>
<dbReference type="FunFam" id="3.40.50.2000:FF:000078">
    <property type="entry name" value="Glycosyltransferase"/>
    <property type="match status" value="1"/>
</dbReference>
<dbReference type="FunFam" id="3.40.50.2000:FF:000178">
    <property type="entry name" value="Glycosyltransferase"/>
    <property type="match status" value="1"/>
</dbReference>
<dbReference type="Gene3D" id="3.40.50.2000">
    <property type="entry name" value="Glycogen Phosphorylase B"/>
    <property type="match status" value="2"/>
</dbReference>
<dbReference type="InterPro" id="IPR002213">
    <property type="entry name" value="UDP_glucos_trans"/>
</dbReference>
<dbReference type="InterPro" id="IPR035595">
    <property type="entry name" value="UDP_glycos_trans_CS"/>
</dbReference>
<dbReference type="PANTHER" id="PTHR11926:SF1494">
    <property type="entry name" value="FLAVONOL 3-O-GLUCOSYLTRANSFERASE UGT76E12-RELATED"/>
    <property type="match status" value="1"/>
</dbReference>
<dbReference type="PANTHER" id="PTHR11926">
    <property type="entry name" value="GLUCOSYL/GLUCURONOSYL TRANSFERASES"/>
    <property type="match status" value="1"/>
</dbReference>
<dbReference type="Pfam" id="PF00201">
    <property type="entry name" value="UDPGT"/>
    <property type="match status" value="1"/>
</dbReference>
<dbReference type="SUPFAM" id="SSF53756">
    <property type="entry name" value="UDP-Glycosyltransferase/glycogen phosphorylase"/>
    <property type="match status" value="1"/>
</dbReference>
<dbReference type="PROSITE" id="PS00375">
    <property type="entry name" value="UDPGT"/>
    <property type="match status" value="1"/>
</dbReference>
<organism>
    <name type="scientific">Arabidopsis thaliana</name>
    <name type="common">Mouse-ear cress</name>
    <dbReference type="NCBI Taxonomy" id="3702"/>
    <lineage>
        <taxon>Eukaryota</taxon>
        <taxon>Viridiplantae</taxon>
        <taxon>Streptophyta</taxon>
        <taxon>Embryophyta</taxon>
        <taxon>Tracheophyta</taxon>
        <taxon>Spermatophyta</taxon>
        <taxon>Magnoliopsida</taxon>
        <taxon>eudicotyledons</taxon>
        <taxon>Gunneridae</taxon>
        <taxon>Pentapetalae</taxon>
        <taxon>rosids</taxon>
        <taxon>malvids</taxon>
        <taxon>Brassicales</taxon>
        <taxon>Brassicaceae</taxon>
        <taxon>Camelineae</taxon>
        <taxon>Arabidopsis</taxon>
    </lineage>
</organism>
<proteinExistence type="evidence at transcript level"/>
<comment type="similarity">
    <text evidence="2">Belongs to the UDP-glycosyltransferase family.</text>
</comment>